<name>CDD_SHESM</name>
<sequence length="296" mass="32072">MQDRFIRSITQLPTPLADALIPLLHQNFAGHIDAQQLAELVQSSKMTEAEVLLALLPIAAALAKPPISEFYVGAIAKGKSGDIYMGANLELPGEALFHSVHAEQSAISHAWLSGESQIVDMIVNASPCGHCRQFMNELVEGGQIKIHLPSQDSHLLSYYLPYAFGPKDLNVQSPLLVKHETEFALDSSDPMVIEALDHAGLSYAPYTQSYAAVVLETSDGATYCGRYAENAAFNPSMLPMQMALSNLTRHNRDFGEIRRAVLVESSQGKISLVGATMDALHAVAAIELEHIVVDPV</sequence>
<dbReference type="EC" id="3.5.4.5" evidence="1"/>
<dbReference type="EMBL" id="CP000446">
    <property type="protein sequence ID" value="ABI39482.1"/>
    <property type="molecule type" value="Genomic_DNA"/>
</dbReference>
<dbReference type="RefSeq" id="WP_011623165.1">
    <property type="nucleotide sequence ID" value="NC_008321.1"/>
</dbReference>
<dbReference type="SMR" id="Q0HHI5"/>
<dbReference type="KEGG" id="she:Shewmr4_2411"/>
<dbReference type="HOGENOM" id="CLU_052424_0_0_6"/>
<dbReference type="GO" id="GO:0005829">
    <property type="term" value="C:cytosol"/>
    <property type="evidence" value="ECO:0007669"/>
    <property type="project" value="TreeGrafter"/>
</dbReference>
<dbReference type="GO" id="GO:0004126">
    <property type="term" value="F:cytidine deaminase activity"/>
    <property type="evidence" value="ECO:0007669"/>
    <property type="project" value="UniProtKB-UniRule"/>
</dbReference>
<dbReference type="GO" id="GO:0042802">
    <property type="term" value="F:identical protein binding"/>
    <property type="evidence" value="ECO:0007669"/>
    <property type="project" value="UniProtKB-ARBA"/>
</dbReference>
<dbReference type="GO" id="GO:0008270">
    <property type="term" value="F:zinc ion binding"/>
    <property type="evidence" value="ECO:0007669"/>
    <property type="project" value="UniProtKB-UniRule"/>
</dbReference>
<dbReference type="GO" id="GO:0009972">
    <property type="term" value="P:cytidine deamination"/>
    <property type="evidence" value="ECO:0007669"/>
    <property type="project" value="InterPro"/>
</dbReference>
<dbReference type="CDD" id="cd01283">
    <property type="entry name" value="cytidine_deaminase"/>
    <property type="match status" value="1"/>
</dbReference>
<dbReference type="FunFam" id="3.40.140.10:FF:000007">
    <property type="entry name" value="Cytidine deaminase"/>
    <property type="match status" value="1"/>
</dbReference>
<dbReference type="FunFam" id="3.40.140.10:FF:000144">
    <property type="entry name" value="Cytidine deaminase"/>
    <property type="match status" value="1"/>
</dbReference>
<dbReference type="Gene3D" id="3.40.140.10">
    <property type="entry name" value="Cytidine Deaminase, domain 2"/>
    <property type="match status" value="2"/>
</dbReference>
<dbReference type="HAMAP" id="MF_01558">
    <property type="entry name" value="Cyt_deam"/>
    <property type="match status" value="1"/>
</dbReference>
<dbReference type="InterPro" id="IPR016192">
    <property type="entry name" value="APOBEC/CMP_deaminase_Zn-bd"/>
</dbReference>
<dbReference type="InterPro" id="IPR002125">
    <property type="entry name" value="CMP_dCMP_dom"/>
</dbReference>
<dbReference type="InterPro" id="IPR013171">
    <property type="entry name" value="Cyd/dCyd_deaminase_Zn-bd"/>
</dbReference>
<dbReference type="InterPro" id="IPR050202">
    <property type="entry name" value="Cyt/Deoxycyt_deaminase"/>
</dbReference>
<dbReference type="InterPro" id="IPR016193">
    <property type="entry name" value="Cytidine_deaminase-like"/>
</dbReference>
<dbReference type="InterPro" id="IPR020797">
    <property type="entry name" value="Cytidine_deaminase_bacteria"/>
</dbReference>
<dbReference type="NCBIfam" id="NF006537">
    <property type="entry name" value="PRK09027.1"/>
    <property type="match status" value="1"/>
</dbReference>
<dbReference type="PANTHER" id="PTHR11644">
    <property type="entry name" value="CYTIDINE DEAMINASE"/>
    <property type="match status" value="1"/>
</dbReference>
<dbReference type="PANTHER" id="PTHR11644:SF2">
    <property type="entry name" value="CYTIDINE DEAMINASE"/>
    <property type="match status" value="1"/>
</dbReference>
<dbReference type="Pfam" id="PF00383">
    <property type="entry name" value="dCMP_cyt_deam_1"/>
    <property type="match status" value="1"/>
</dbReference>
<dbReference type="Pfam" id="PF08211">
    <property type="entry name" value="dCMP_cyt_deam_2"/>
    <property type="match status" value="1"/>
</dbReference>
<dbReference type="PIRSF" id="PIRSF006334">
    <property type="entry name" value="Cdd_plus_pseudo"/>
    <property type="match status" value="1"/>
</dbReference>
<dbReference type="SUPFAM" id="SSF53927">
    <property type="entry name" value="Cytidine deaminase-like"/>
    <property type="match status" value="2"/>
</dbReference>
<dbReference type="PROSITE" id="PS00903">
    <property type="entry name" value="CYT_DCMP_DEAMINASES_1"/>
    <property type="match status" value="1"/>
</dbReference>
<dbReference type="PROSITE" id="PS51747">
    <property type="entry name" value="CYT_DCMP_DEAMINASES_2"/>
    <property type="match status" value="2"/>
</dbReference>
<comment type="function">
    <text evidence="1">This enzyme scavenges exogenous and endogenous cytidine and 2'-deoxycytidine for UMP synthesis.</text>
</comment>
<comment type="catalytic activity">
    <reaction evidence="1">
        <text>cytidine + H2O + H(+) = uridine + NH4(+)</text>
        <dbReference type="Rhea" id="RHEA:16069"/>
        <dbReference type="ChEBI" id="CHEBI:15377"/>
        <dbReference type="ChEBI" id="CHEBI:15378"/>
        <dbReference type="ChEBI" id="CHEBI:16704"/>
        <dbReference type="ChEBI" id="CHEBI:17562"/>
        <dbReference type="ChEBI" id="CHEBI:28938"/>
        <dbReference type="EC" id="3.5.4.5"/>
    </reaction>
</comment>
<comment type="catalytic activity">
    <reaction evidence="1">
        <text>2'-deoxycytidine + H2O + H(+) = 2'-deoxyuridine + NH4(+)</text>
        <dbReference type="Rhea" id="RHEA:13433"/>
        <dbReference type="ChEBI" id="CHEBI:15377"/>
        <dbReference type="ChEBI" id="CHEBI:15378"/>
        <dbReference type="ChEBI" id="CHEBI:15698"/>
        <dbReference type="ChEBI" id="CHEBI:16450"/>
        <dbReference type="ChEBI" id="CHEBI:28938"/>
        <dbReference type="EC" id="3.5.4.5"/>
    </reaction>
</comment>
<comment type="cofactor">
    <cofactor evidence="1">
        <name>Zn(2+)</name>
        <dbReference type="ChEBI" id="CHEBI:29105"/>
    </cofactor>
    <text evidence="1">Binds 1 zinc ion.</text>
</comment>
<comment type="subunit">
    <text evidence="1">Homodimer.</text>
</comment>
<comment type="similarity">
    <text evidence="1">Belongs to the cytidine and deoxycytidylate deaminase family.</text>
</comment>
<proteinExistence type="inferred from homology"/>
<keyword id="KW-0378">Hydrolase</keyword>
<keyword id="KW-0479">Metal-binding</keyword>
<keyword id="KW-0862">Zinc</keyword>
<accession>Q0HHI5</accession>
<gene>
    <name evidence="1" type="primary">cdd</name>
    <name type="ordered locus">Shewmr4_2411</name>
</gene>
<feature type="chain" id="PRO_1000068966" description="Cytidine deaminase">
    <location>
        <begin position="1"/>
        <end position="296"/>
    </location>
</feature>
<feature type="domain" description="CMP/dCMP-type deaminase 1" evidence="2">
    <location>
        <begin position="47"/>
        <end position="167"/>
    </location>
</feature>
<feature type="domain" description="CMP/dCMP-type deaminase 2" evidence="2">
    <location>
        <begin position="186"/>
        <end position="296"/>
    </location>
</feature>
<feature type="active site" description="Proton donor" evidence="1">
    <location>
        <position position="103"/>
    </location>
</feature>
<feature type="binding site" evidence="1">
    <location>
        <begin position="88"/>
        <end position="90"/>
    </location>
    <ligand>
        <name>substrate</name>
    </ligand>
</feature>
<feature type="binding site" evidence="1">
    <location>
        <position position="101"/>
    </location>
    <ligand>
        <name>Zn(2+)</name>
        <dbReference type="ChEBI" id="CHEBI:29105"/>
        <note>catalytic</note>
    </ligand>
</feature>
<feature type="binding site" evidence="1">
    <location>
        <position position="128"/>
    </location>
    <ligand>
        <name>Zn(2+)</name>
        <dbReference type="ChEBI" id="CHEBI:29105"/>
        <note>catalytic</note>
    </ligand>
</feature>
<feature type="binding site" evidence="1">
    <location>
        <position position="131"/>
    </location>
    <ligand>
        <name>Zn(2+)</name>
        <dbReference type="ChEBI" id="CHEBI:29105"/>
        <note>catalytic</note>
    </ligand>
</feature>
<reference key="1">
    <citation type="submission" date="2006-08" db="EMBL/GenBank/DDBJ databases">
        <title>Complete sequence of Shewanella sp. MR-4.</title>
        <authorList>
            <consortium name="US DOE Joint Genome Institute"/>
            <person name="Copeland A."/>
            <person name="Lucas S."/>
            <person name="Lapidus A."/>
            <person name="Barry K."/>
            <person name="Detter J.C."/>
            <person name="Glavina del Rio T."/>
            <person name="Hammon N."/>
            <person name="Israni S."/>
            <person name="Dalin E."/>
            <person name="Tice H."/>
            <person name="Pitluck S."/>
            <person name="Kiss H."/>
            <person name="Brettin T."/>
            <person name="Bruce D."/>
            <person name="Han C."/>
            <person name="Tapia R."/>
            <person name="Gilna P."/>
            <person name="Schmutz J."/>
            <person name="Larimer F."/>
            <person name="Land M."/>
            <person name="Hauser L."/>
            <person name="Kyrpides N."/>
            <person name="Mikhailova N."/>
            <person name="Nealson K."/>
            <person name="Konstantinidis K."/>
            <person name="Klappenbach J."/>
            <person name="Tiedje J."/>
            <person name="Richardson P."/>
        </authorList>
    </citation>
    <scope>NUCLEOTIDE SEQUENCE [LARGE SCALE GENOMIC DNA]</scope>
    <source>
        <strain>MR-4</strain>
    </source>
</reference>
<evidence type="ECO:0000255" key="1">
    <source>
        <dbReference type="HAMAP-Rule" id="MF_01558"/>
    </source>
</evidence>
<evidence type="ECO:0000255" key="2">
    <source>
        <dbReference type="PROSITE-ProRule" id="PRU01083"/>
    </source>
</evidence>
<protein>
    <recommendedName>
        <fullName evidence="1">Cytidine deaminase</fullName>
        <ecNumber evidence="1">3.5.4.5</ecNumber>
    </recommendedName>
    <alternativeName>
        <fullName evidence="1">Cytidine aminohydrolase</fullName>
        <shortName evidence="1">CDA</shortName>
    </alternativeName>
</protein>
<organism>
    <name type="scientific">Shewanella sp. (strain MR-4)</name>
    <dbReference type="NCBI Taxonomy" id="60480"/>
    <lineage>
        <taxon>Bacteria</taxon>
        <taxon>Pseudomonadati</taxon>
        <taxon>Pseudomonadota</taxon>
        <taxon>Gammaproteobacteria</taxon>
        <taxon>Alteromonadales</taxon>
        <taxon>Shewanellaceae</taxon>
        <taxon>Shewanella</taxon>
    </lineage>
</organism>